<accession>A6L5A6</accession>
<keyword id="KW-0028">Amino-acid biosynthesis</keyword>
<keyword id="KW-0032">Aminotransferase</keyword>
<keyword id="KW-0963">Cytoplasm</keyword>
<keyword id="KW-0663">Pyridoxal phosphate</keyword>
<keyword id="KW-0664">Pyridoxine biosynthesis</keyword>
<keyword id="KW-0718">Serine biosynthesis</keyword>
<keyword id="KW-0808">Transferase</keyword>
<comment type="function">
    <text evidence="1">Catalyzes the reversible conversion of 3-phosphohydroxypyruvate to phosphoserine and of 3-hydroxy-2-oxo-4-phosphonooxybutanoate to phosphohydroxythreonine.</text>
</comment>
<comment type="catalytic activity">
    <reaction evidence="1">
        <text>O-phospho-L-serine + 2-oxoglutarate = 3-phosphooxypyruvate + L-glutamate</text>
        <dbReference type="Rhea" id="RHEA:14329"/>
        <dbReference type="ChEBI" id="CHEBI:16810"/>
        <dbReference type="ChEBI" id="CHEBI:18110"/>
        <dbReference type="ChEBI" id="CHEBI:29985"/>
        <dbReference type="ChEBI" id="CHEBI:57524"/>
        <dbReference type="EC" id="2.6.1.52"/>
    </reaction>
</comment>
<comment type="catalytic activity">
    <reaction evidence="1">
        <text>4-(phosphooxy)-L-threonine + 2-oxoglutarate = (R)-3-hydroxy-2-oxo-4-phosphooxybutanoate + L-glutamate</text>
        <dbReference type="Rhea" id="RHEA:16573"/>
        <dbReference type="ChEBI" id="CHEBI:16810"/>
        <dbReference type="ChEBI" id="CHEBI:29985"/>
        <dbReference type="ChEBI" id="CHEBI:58452"/>
        <dbReference type="ChEBI" id="CHEBI:58538"/>
        <dbReference type="EC" id="2.6.1.52"/>
    </reaction>
</comment>
<comment type="cofactor">
    <cofactor evidence="1">
        <name>pyridoxal 5'-phosphate</name>
        <dbReference type="ChEBI" id="CHEBI:597326"/>
    </cofactor>
    <text evidence="1">Binds 1 pyridoxal phosphate per subunit.</text>
</comment>
<comment type="pathway">
    <text evidence="1">Amino-acid biosynthesis; L-serine biosynthesis; L-serine from 3-phospho-D-glycerate: step 2/3.</text>
</comment>
<comment type="pathway">
    <text evidence="1">Cofactor biosynthesis; pyridoxine 5'-phosphate biosynthesis; pyridoxine 5'-phosphate from D-erythrose 4-phosphate: step 3/5.</text>
</comment>
<comment type="subunit">
    <text evidence="1">Homodimer.</text>
</comment>
<comment type="subcellular location">
    <subcellularLocation>
        <location evidence="1">Cytoplasm</location>
    </subcellularLocation>
</comment>
<comment type="similarity">
    <text evidence="1">Belongs to the class-V pyridoxal-phosphate-dependent aminotransferase family. SerC subfamily.</text>
</comment>
<feature type="chain" id="PRO_1000058200" description="Phosphoserine aminotransferase">
    <location>
        <begin position="1"/>
        <end position="356"/>
    </location>
</feature>
<feature type="binding site" evidence="1">
    <location>
        <position position="41"/>
    </location>
    <ligand>
        <name>L-glutamate</name>
        <dbReference type="ChEBI" id="CHEBI:29985"/>
    </ligand>
</feature>
<feature type="binding site" evidence="1">
    <location>
        <begin position="75"/>
        <end position="76"/>
    </location>
    <ligand>
        <name>pyridoxal 5'-phosphate</name>
        <dbReference type="ChEBI" id="CHEBI:597326"/>
    </ligand>
</feature>
<feature type="binding site" evidence="1">
    <location>
        <position position="99"/>
    </location>
    <ligand>
        <name>pyridoxal 5'-phosphate</name>
        <dbReference type="ChEBI" id="CHEBI:597326"/>
    </ligand>
</feature>
<feature type="binding site" evidence="1">
    <location>
        <position position="147"/>
    </location>
    <ligand>
        <name>pyridoxal 5'-phosphate</name>
        <dbReference type="ChEBI" id="CHEBI:597326"/>
    </ligand>
</feature>
<feature type="binding site" evidence="1">
    <location>
        <position position="166"/>
    </location>
    <ligand>
        <name>pyridoxal 5'-phosphate</name>
        <dbReference type="ChEBI" id="CHEBI:597326"/>
    </ligand>
</feature>
<feature type="binding site" evidence="1">
    <location>
        <position position="189"/>
    </location>
    <ligand>
        <name>pyridoxal 5'-phosphate</name>
        <dbReference type="ChEBI" id="CHEBI:597326"/>
    </ligand>
</feature>
<feature type="binding site" evidence="1">
    <location>
        <begin position="231"/>
        <end position="232"/>
    </location>
    <ligand>
        <name>pyridoxal 5'-phosphate</name>
        <dbReference type="ChEBI" id="CHEBI:597326"/>
    </ligand>
</feature>
<feature type="modified residue" description="N6-(pyridoxal phosphate)lysine" evidence="1">
    <location>
        <position position="190"/>
    </location>
</feature>
<proteinExistence type="inferred from homology"/>
<sequence length="356" mass="39555">MKKHNFNAGPSILPREVIEKTAQAVLDFNGSGLSIMEISHRAKDFQPVVDEAVALFKELLNIPEGYSVLFLGGGASLEFCMIPFNFLEKKAAYLNTGVWAKKAMKEAKAFGEVVEVASSAEATYTYIPKDYTVPADADYFHVTTNNTIYGTELHEDLDSPVPMIADMSSDIFSRPIDVSKYICIYGGAQKNLAPAGVTFVIVKNDAVGKVSRYIPTMLNYQTHIDGGSMFNTPPVLPIYAALQTLRWIKANGGVAEMQKRAKEKADMLYAEIDRNKMFRGTVTDKADRSYMNICFVMNDEYKDLEADFLKFATEKGMVGIKGHRSVGGFRASCYNAMPKESVQALIDCMQEFEKLH</sequence>
<name>SERC_PHOV8</name>
<protein>
    <recommendedName>
        <fullName evidence="1">Phosphoserine aminotransferase</fullName>
        <ecNumber evidence="1">2.6.1.52</ecNumber>
    </recommendedName>
    <alternativeName>
        <fullName evidence="1">Phosphohydroxythreonine aminotransferase</fullName>
        <shortName evidence="1">PSAT</shortName>
    </alternativeName>
</protein>
<dbReference type="EC" id="2.6.1.52" evidence="1"/>
<dbReference type="EMBL" id="CP000139">
    <property type="protein sequence ID" value="ABR40870.1"/>
    <property type="molecule type" value="Genomic_DNA"/>
</dbReference>
<dbReference type="RefSeq" id="WP_005843530.1">
    <property type="nucleotide sequence ID" value="NZ_JANSWM010000071.1"/>
</dbReference>
<dbReference type="SMR" id="A6L5A6"/>
<dbReference type="STRING" id="435590.BVU_3241"/>
<dbReference type="PaxDb" id="435590-BVU_3241"/>
<dbReference type="GeneID" id="5304202"/>
<dbReference type="KEGG" id="bvu:BVU_3241"/>
<dbReference type="eggNOG" id="COG1932">
    <property type="taxonomic scope" value="Bacteria"/>
</dbReference>
<dbReference type="HOGENOM" id="CLU_034866_0_2_10"/>
<dbReference type="BioCyc" id="BVUL435590:G1G59-3362-MONOMER"/>
<dbReference type="UniPathway" id="UPA00135">
    <property type="reaction ID" value="UER00197"/>
</dbReference>
<dbReference type="UniPathway" id="UPA00244">
    <property type="reaction ID" value="UER00311"/>
</dbReference>
<dbReference type="Proteomes" id="UP000002861">
    <property type="component" value="Chromosome"/>
</dbReference>
<dbReference type="GO" id="GO:0005737">
    <property type="term" value="C:cytoplasm"/>
    <property type="evidence" value="ECO:0007669"/>
    <property type="project" value="UniProtKB-SubCell"/>
</dbReference>
<dbReference type="GO" id="GO:0004648">
    <property type="term" value="F:O-phospho-L-serine:2-oxoglutarate aminotransferase activity"/>
    <property type="evidence" value="ECO:0007669"/>
    <property type="project" value="UniProtKB-UniRule"/>
</dbReference>
<dbReference type="GO" id="GO:0030170">
    <property type="term" value="F:pyridoxal phosphate binding"/>
    <property type="evidence" value="ECO:0007669"/>
    <property type="project" value="UniProtKB-UniRule"/>
</dbReference>
<dbReference type="GO" id="GO:0006564">
    <property type="term" value="P:L-serine biosynthetic process"/>
    <property type="evidence" value="ECO:0007669"/>
    <property type="project" value="UniProtKB-UniRule"/>
</dbReference>
<dbReference type="GO" id="GO:0008615">
    <property type="term" value="P:pyridoxine biosynthetic process"/>
    <property type="evidence" value="ECO:0007669"/>
    <property type="project" value="UniProtKB-UniRule"/>
</dbReference>
<dbReference type="FunFam" id="3.40.640.10:FF:000010">
    <property type="entry name" value="Phosphoserine aminotransferase"/>
    <property type="match status" value="1"/>
</dbReference>
<dbReference type="FunFam" id="3.90.1150.10:FF:000006">
    <property type="entry name" value="Phosphoserine aminotransferase"/>
    <property type="match status" value="1"/>
</dbReference>
<dbReference type="Gene3D" id="3.90.1150.10">
    <property type="entry name" value="Aspartate Aminotransferase, domain 1"/>
    <property type="match status" value="1"/>
</dbReference>
<dbReference type="Gene3D" id="3.40.640.10">
    <property type="entry name" value="Type I PLP-dependent aspartate aminotransferase-like (Major domain)"/>
    <property type="match status" value="1"/>
</dbReference>
<dbReference type="HAMAP" id="MF_00160">
    <property type="entry name" value="SerC_aminotrans_5"/>
    <property type="match status" value="1"/>
</dbReference>
<dbReference type="InterPro" id="IPR000192">
    <property type="entry name" value="Aminotrans_V_dom"/>
</dbReference>
<dbReference type="InterPro" id="IPR022278">
    <property type="entry name" value="Pser_aminoTfrase"/>
</dbReference>
<dbReference type="InterPro" id="IPR015424">
    <property type="entry name" value="PyrdxlP-dep_Trfase"/>
</dbReference>
<dbReference type="InterPro" id="IPR015421">
    <property type="entry name" value="PyrdxlP-dep_Trfase_major"/>
</dbReference>
<dbReference type="InterPro" id="IPR015422">
    <property type="entry name" value="PyrdxlP-dep_Trfase_small"/>
</dbReference>
<dbReference type="NCBIfam" id="NF003764">
    <property type="entry name" value="PRK05355.1"/>
    <property type="match status" value="1"/>
</dbReference>
<dbReference type="NCBIfam" id="TIGR01364">
    <property type="entry name" value="serC_1"/>
    <property type="match status" value="1"/>
</dbReference>
<dbReference type="PANTHER" id="PTHR43247">
    <property type="entry name" value="PHOSPHOSERINE AMINOTRANSFERASE"/>
    <property type="match status" value="1"/>
</dbReference>
<dbReference type="PANTHER" id="PTHR43247:SF1">
    <property type="entry name" value="PHOSPHOSERINE AMINOTRANSFERASE"/>
    <property type="match status" value="1"/>
</dbReference>
<dbReference type="Pfam" id="PF00266">
    <property type="entry name" value="Aminotran_5"/>
    <property type="match status" value="1"/>
</dbReference>
<dbReference type="PIRSF" id="PIRSF000525">
    <property type="entry name" value="SerC"/>
    <property type="match status" value="1"/>
</dbReference>
<dbReference type="SUPFAM" id="SSF53383">
    <property type="entry name" value="PLP-dependent transferases"/>
    <property type="match status" value="1"/>
</dbReference>
<organism>
    <name type="scientific">Phocaeicola vulgatus (strain ATCC 8482 / DSM 1447 / JCM 5826 / CCUG 4940 / NBRC 14291 / NCTC 11154)</name>
    <name type="common">Bacteroides vulgatus</name>
    <dbReference type="NCBI Taxonomy" id="435590"/>
    <lineage>
        <taxon>Bacteria</taxon>
        <taxon>Pseudomonadati</taxon>
        <taxon>Bacteroidota</taxon>
        <taxon>Bacteroidia</taxon>
        <taxon>Bacteroidales</taxon>
        <taxon>Bacteroidaceae</taxon>
        <taxon>Phocaeicola</taxon>
    </lineage>
</organism>
<evidence type="ECO:0000255" key="1">
    <source>
        <dbReference type="HAMAP-Rule" id="MF_00160"/>
    </source>
</evidence>
<reference key="1">
    <citation type="journal article" date="2007" name="PLoS Biol.">
        <title>Evolution of symbiotic bacteria in the distal human intestine.</title>
        <authorList>
            <person name="Xu J."/>
            <person name="Mahowald M.A."/>
            <person name="Ley R.E."/>
            <person name="Lozupone C.A."/>
            <person name="Hamady M."/>
            <person name="Martens E.C."/>
            <person name="Henrissat B."/>
            <person name="Coutinho P.M."/>
            <person name="Minx P."/>
            <person name="Latreille P."/>
            <person name="Cordum H."/>
            <person name="Van Brunt A."/>
            <person name="Kim K."/>
            <person name="Fulton R.S."/>
            <person name="Fulton L.A."/>
            <person name="Clifton S.W."/>
            <person name="Wilson R.K."/>
            <person name="Knight R.D."/>
            <person name="Gordon J.I."/>
        </authorList>
    </citation>
    <scope>NUCLEOTIDE SEQUENCE [LARGE SCALE GENOMIC DNA]</scope>
    <source>
        <strain>ATCC 8482 / DSM 1447 / JCM 5826 / CCUG 4940 / NBRC 14291 / NCTC 11154</strain>
    </source>
</reference>
<gene>
    <name evidence="1" type="primary">serC</name>
    <name type="ordered locus">BVU_3241</name>
</gene>